<proteinExistence type="evidence at transcript level"/>
<name>F83DB_XENLA</name>
<protein>
    <recommendedName>
        <fullName evidence="3">Protein FAM83D-B</fullName>
    </recommendedName>
</protein>
<gene>
    <name evidence="1" type="primary">fam83d-b</name>
</gene>
<dbReference type="EMBL" id="BC129056">
    <property type="protein sequence ID" value="AAI29057.1"/>
    <property type="status" value="ALT_INIT"/>
    <property type="molecule type" value="mRNA"/>
</dbReference>
<dbReference type="SMR" id="A1L1G9"/>
<dbReference type="GeneID" id="495259"/>
<dbReference type="KEGG" id="xla:495259"/>
<dbReference type="AGR" id="Xenbase:XB-GENE-964366"/>
<dbReference type="CTD" id="495259"/>
<dbReference type="Xenbase" id="XB-GENE-964366">
    <property type="gene designation" value="fam83d.L"/>
</dbReference>
<dbReference type="OMA" id="HFLDMCM"/>
<dbReference type="OrthoDB" id="9882762at2759"/>
<dbReference type="Proteomes" id="UP000186698">
    <property type="component" value="Chromosome 9_10L"/>
</dbReference>
<dbReference type="Bgee" id="495259">
    <property type="expression patterns" value="Expressed in egg cell and 15 other cell types or tissues"/>
</dbReference>
<dbReference type="GO" id="GO:0005737">
    <property type="term" value="C:cytoplasm"/>
    <property type="evidence" value="ECO:0000250"/>
    <property type="project" value="UniProtKB"/>
</dbReference>
<dbReference type="GO" id="GO:0005829">
    <property type="term" value="C:cytosol"/>
    <property type="evidence" value="ECO:0000318"/>
    <property type="project" value="GO_Central"/>
</dbReference>
<dbReference type="GO" id="GO:0097431">
    <property type="term" value="C:mitotic spindle pole"/>
    <property type="evidence" value="ECO:0000250"/>
    <property type="project" value="UniProtKB"/>
</dbReference>
<dbReference type="GO" id="GO:0019901">
    <property type="term" value="F:protein kinase binding"/>
    <property type="evidence" value="ECO:0000318"/>
    <property type="project" value="GO_Central"/>
</dbReference>
<dbReference type="GO" id="GO:0051301">
    <property type="term" value="P:cell division"/>
    <property type="evidence" value="ECO:0007669"/>
    <property type="project" value="UniProtKB-KW"/>
</dbReference>
<dbReference type="GO" id="GO:0008283">
    <property type="term" value="P:cell population proliferation"/>
    <property type="evidence" value="ECO:0000250"/>
    <property type="project" value="UniProtKB"/>
</dbReference>
<dbReference type="GO" id="GO:0051310">
    <property type="term" value="P:metaphase chromosome alignment"/>
    <property type="evidence" value="ECO:0000250"/>
    <property type="project" value="UniProtKB"/>
</dbReference>
<dbReference type="GO" id="GO:1902808">
    <property type="term" value="P:positive regulation of cell cycle G1/S phase transition"/>
    <property type="evidence" value="ECO:0000318"/>
    <property type="project" value="GO_Central"/>
</dbReference>
<dbReference type="GO" id="GO:1902480">
    <property type="term" value="P:protein localization to mitotic spindle"/>
    <property type="evidence" value="ECO:0000318"/>
    <property type="project" value="GO_Central"/>
</dbReference>
<dbReference type="GO" id="GO:0070372">
    <property type="term" value="P:regulation of ERK1 and ERK2 cascade"/>
    <property type="evidence" value="ECO:0000250"/>
    <property type="project" value="UniProtKB"/>
</dbReference>
<dbReference type="GO" id="GO:0032006">
    <property type="term" value="P:regulation of TOR signaling"/>
    <property type="evidence" value="ECO:0000318"/>
    <property type="project" value="GO_Central"/>
</dbReference>
<dbReference type="GO" id="GO:0007165">
    <property type="term" value="P:signal transduction"/>
    <property type="evidence" value="ECO:0000318"/>
    <property type="project" value="GO_Central"/>
</dbReference>
<dbReference type="CDD" id="cd09184">
    <property type="entry name" value="PLDc_FAM83D_N"/>
    <property type="match status" value="1"/>
</dbReference>
<dbReference type="FunFam" id="3.30.870.10:FF:000004">
    <property type="entry name" value="protein FAM83H isoform X2"/>
    <property type="match status" value="1"/>
</dbReference>
<dbReference type="Gene3D" id="3.30.870.10">
    <property type="entry name" value="Endonuclease Chain A"/>
    <property type="match status" value="1"/>
</dbReference>
<dbReference type="InterPro" id="IPR050944">
    <property type="entry name" value="FAM83"/>
</dbReference>
<dbReference type="InterPro" id="IPR012461">
    <property type="entry name" value="SACK1"/>
</dbReference>
<dbReference type="PANTHER" id="PTHR16181">
    <property type="entry name" value="PROTEIN FAM83A-RELATED"/>
    <property type="match status" value="1"/>
</dbReference>
<dbReference type="PANTHER" id="PTHR16181:SF29">
    <property type="entry name" value="PROTEIN FAM83A-RELATED"/>
    <property type="match status" value="1"/>
</dbReference>
<dbReference type="Pfam" id="PF07894">
    <property type="entry name" value="SACK1"/>
    <property type="match status" value="1"/>
</dbReference>
<dbReference type="SUPFAM" id="SSF56024">
    <property type="entry name" value="Phospholipase D/nuclease"/>
    <property type="match status" value="1"/>
</dbReference>
<comment type="function">
    <text evidence="1">May regulate cell proliferation, growth, migration and epithelial to mesenchymal transition. May also be important for proper chromosome congression and alignment during mitosis.</text>
</comment>
<comment type="subcellular location">
    <subcellularLocation>
        <location evidence="1">Cytoplasm</location>
    </subcellularLocation>
    <subcellularLocation>
        <location evidence="1">Cytoplasm</location>
        <location evidence="1">Cytoskeleton</location>
        <location evidence="1">Spindle</location>
    </subcellularLocation>
    <subcellularLocation>
        <location evidence="1">Cytoplasm</location>
        <location evidence="1">Cytoskeleton</location>
        <location evidence="1">Spindle pole</location>
    </subcellularLocation>
</comment>
<comment type="similarity">
    <text evidence="3">Belongs to the FAM83 family.</text>
</comment>
<comment type="sequence caution" evidence="3">
    <conflict type="erroneous initiation">
        <sequence resource="EMBL-CDS" id="AAI29057"/>
    </conflict>
    <text>Extended N-terminus.</text>
</comment>
<accession>A1L1G9</accession>
<reference key="1">
    <citation type="submission" date="2006-12" db="EMBL/GenBank/DDBJ databases">
        <authorList>
            <consortium name="NIH - Xenopus Gene Collection (XGC) project"/>
        </authorList>
    </citation>
    <scope>NUCLEOTIDE SEQUENCE [LARGE SCALE MRNA]</scope>
    <source>
        <tissue>Spleen</tissue>
    </source>
</reference>
<feature type="chain" id="PRO_0000365011" description="Protein FAM83D-B">
    <location>
        <begin position="1"/>
        <end position="562"/>
    </location>
</feature>
<feature type="region of interest" description="Disordered" evidence="2">
    <location>
        <begin position="424"/>
        <end position="472"/>
    </location>
</feature>
<feature type="compositionally biased region" description="Low complexity" evidence="2">
    <location>
        <begin position="425"/>
        <end position="472"/>
    </location>
</feature>
<sequence length="562" mass="62364">MANASQCLDDVPMGGRWPAAPPDQYNEAHRLAMEELVSGGPEAMRGFLKRERLPSFLSEPEMGEILGCASVLPCGDEENSMSASVDCSSVTYFPDRSDVEPPILELGWPAFTTGSYRGVTRVDVHFQPSFGDTIYTCKEAARELIRSAREVIALVMDNFTDNDIFRDIHEACRKRRVPVYILLDQTQVSHFLTMCYNLGVSIETEPHMRVRLLTGNNYYTRSGTKIIGKVREKFLLVDGVKVATGNYSFTWTDGKLNSSNMLVLSGQVVEKFDLQFRILYAQSNPIGAKLLSSIRSRVMCLDKLPCKLPASKKPTLSSLLRMDQAKLSSTPKRHFDEFGAKFNRDVVALDKAAEDEWLQSCDIISGLKEMQTVEVQTEPWEGKNNVRGVDVGIQTSVAAANAATQTSVLSRMASTQTVMVSRSITTQTTETSQCTTQTPAPTSSVARLSNSSNSSSSSFSSASTTSTGSNCSMKSSDFSGTAFYQPEYPLGNCFKKLTKDRQYHYSTIRSKLNHMVSILSNRNRVPNSYMANDAPCYGLQRREIMHGSLLNLRDGVRFYPNM</sequence>
<organism>
    <name type="scientific">Xenopus laevis</name>
    <name type="common">African clawed frog</name>
    <dbReference type="NCBI Taxonomy" id="8355"/>
    <lineage>
        <taxon>Eukaryota</taxon>
        <taxon>Metazoa</taxon>
        <taxon>Chordata</taxon>
        <taxon>Craniata</taxon>
        <taxon>Vertebrata</taxon>
        <taxon>Euteleostomi</taxon>
        <taxon>Amphibia</taxon>
        <taxon>Batrachia</taxon>
        <taxon>Anura</taxon>
        <taxon>Pipoidea</taxon>
        <taxon>Pipidae</taxon>
        <taxon>Xenopodinae</taxon>
        <taxon>Xenopus</taxon>
        <taxon>Xenopus</taxon>
    </lineage>
</organism>
<evidence type="ECO:0000250" key="1">
    <source>
        <dbReference type="UniProtKB" id="Q9H4H8"/>
    </source>
</evidence>
<evidence type="ECO:0000256" key="2">
    <source>
        <dbReference type="SAM" id="MobiDB-lite"/>
    </source>
</evidence>
<evidence type="ECO:0000305" key="3"/>
<keyword id="KW-0131">Cell cycle</keyword>
<keyword id="KW-0132">Cell division</keyword>
<keyword id="KW-0963">Cytoplasm</keyword>
<keyword id="KW-0206">Cytoskeleton</keyword>
<keyword id="KW-0498">Mitosis</keyword>
<keyword id="KW-1185">Reference proteome</keyword>